<comment type="function">
    <text evidence="1">One of the primary rRNA binding proteins, it binds directly to 16S rRNA where it nucleates assembly of the head domain of the 30S subunit. Is located at the subunit interface close to the decoding center, probably blocks exit of the E-site tRNA.</text>
</comment>
<comment type="subunit">
    <text evidence="1">Part of the 30S ribosomal subunit. Contacts proteins S9 and S11.</text>
</comment>
<comment type="similarity">
    <text evidence="1">Belongs to the universal ribosomal protein uS7 family.</text>
</comment>
<keyword id="KW-1185">Reference proteome</keyword>
<keyword id="KW-0687">Ribonucleoprotein</keyword>
<keyword id="KW-0689">Ribosomal protein</keyword>
<keyword id="KW-0694">RNA-binding</keyword>
<keyword id="KW-0699">rRNA-binding</keyword>
<keyword id="KW-0820">tRNA-binding</keyword>
<organism>
    <name type="scientific">Neisseria meningitidis serogroup B (strain ATCC BAA-335 / MC58)</name>
    <dbReference type="NCBI Taxonomy" id="122586"/>
    <lineage>
        <taxon>Bacteria</taxon>
        <taxon>Pseudomonadati</taxon>
        <taxon>Pseudomonadota</taxon>
        <taxon>Betaproteobacteria</taxon>
        <taxon>Neisseriales</taxon>
        <taxon>Neisseriaceae</taxon>
        <taxon>Neisseria</taxon>
    </lineage>
</organism>
<evidence type="ECO:0000255" key="1">
    <source>
        <dbReference type="HAMAP-Rule" id="MF_00480"/>
    </source>
</evidence>
<evidence type="ECO:0000305" key="2"/>
<gene>
    <name evidence="1" type="primary">rpsG</name>
    <name type="ordered locus">NMB0137</name>
</gene>
<accession>P66614</accession>
<accession>Q9JR15</accession>
<reference key="1">
    <citation type="journal article" date="2000" name="Science">
        <title>Complete genome sequence of Neisseria meningitidis serogroup B strain MC58.</title>
        <authorList>
            <person name="Tettelin H."/>
            <person name="Saunders N.J."/>
            <person name="Heidelberg J.F."/>
            <person name="Jeffries A.C."/>
            <person name="Nelson K.E."/>
            <person name="Eisen J.A."/>
            <person name="Ketchum K.A."/>
            <person name="Hood D.W."/>
            <person name="Peden J.F."/>
            <person name="Dodson R.J."/>
            <person name="Nelson W.C."/>
            <person name="Gwinn M.L."/>
            <person name="DeBoy R.T."/>
            <person name="Peterson J.D."/>
            <person name="Hickey E.K."/>
            <person name="Haft D.H."/>
            <person name="Salzberg S.L."/>
            <person name="White O."/>
            <person name="Fleischmann R.D."/>
            <person name="Dougherty B.A."/>
            <person name="Mason T.M."/>
            <person name="Ciecko A."/>
            <person name="Parksey D.S."/>
            <person name="Blair E."/>
            <person name="Cittone H."/>
            <person name="Clark E.B."/>
            <person name="Cotton M.D."/>
            <person name="Utterback T.R."/>
            <person name="Khouri H.M."/>
            <person name="Qin H."/>
            <person name="Vamathevan J.J."/>
            <person name="Gill J."/>
            <person name="Scarlato V."/>
            <person name="Masignani V."/>
            <person name="Pizza M."/>
            <person name="Grandi G."/>
            <person name="Sun L."/>
            <person name="Smith H.O."/>
            <person name="Fraser C.M."/>
            <person name="Moxon E.R."/>
            <person name="Rappuoli R."/>
            <person name="Venter J.C."/>
        </authorList>
    </citation>
    <scope>NUCLEOTIDE SEQUENCE [LARGE SCALE GENOMIC DNA]</scope>
    <source>
        <strain>ATCC BAA-335 / MC58</strain>
    </source>
</reference>
<name>RS7_NEIMB</name>
<dbReference type="EMBL" id="AE002098">
    <property type="protein sequence ID" value="AAF40596.1"/>
    <property type="molecule type" value="Genomic_DNA"/>
</dbReference>
<dbReference type="PIR" id="B81234">
    <property type="entry name" value="B81234"/>
</dbReference>
<dbReference type="RefSeq" id="NP_273195.1">
    <property type="nucleotide sequence ID" value="NC_003112.2"/>
</dbReference>
<dbReference type="RefSeq" id="WP_002215391.1">
    <property type="nucleotide sequence ID" value="NC_003112.2"/>
</dbReference>
<dbReference type="SMR" id="P66614"/>
<dbReference type="FunCoup" id="P66614">
    <property type="interactions" value="613"/>
</dbReference>
<dbReference type="STRING" id="122586.NMB0137"/>
<dbReference type="PaxDb" id="122586-NMB0137"/>
<dbReference type="GeneID" id="93387211"/>
<dbReference type="KEGG" id="nme:NMB0137"/>
<dbReference type="PATRIC" id="fig|122586.8.peg.177"/>
<dbReference type="HOGENOM" id="CLU_072226_1_1_4"/>
<dbReference type="InParanoid" id="P66614"/>
<dbReference type="OrthoDB" id="9807653at2"/>
<dbReference type="Proteomes" id="UP000000425">
    <property type="component" value="Chromosome"/>
</dbReference>
<dbReference type="GO" id="GO:0022627">
    <property type="term" value="C:cytosolic small ribosomal subunit"/>
    <property type="evidence" value="ECO:0000318"/>
    <property type="project" value="GO_Central"/>
</dbReference>
<dbReference type="GO" id="GO:0005840">
    <property type="term" value="C:ribosome"/>
    <property type="evidence" value="ECO:0000318"/>
    <property type="project" value="GO_Central"/>
</dbReference>
<dbReference type="GO" id="GO:0003729">
    <property type="term" value="F:mRNA binding"/>
    <property type="evidence" value="ECO:0000318"/>
    <property type="project" value="GO_Central"/>
</dbReference>
<dbReference type="GO" id="GO:0019843">
    <property type="term" value="F:rRNA binding"/>
    <property type="evidence" value="ECO:0000318"/>
    <property type="project" value="GO_Central"/>
</dbReference>
<dbReference type="GO" id="GO:0003735">
    <property type="term" value="F:structural constituent of ribosome"/>
    <property type="evidence" value="ECO:0000318"/>
    <property type="project" value="GO_Central"/>
</dbReference>
<dbReference type="GO" id="GO:0000049">
    <property type="term" value="F:tRNA binding"/>
    <property type="evidence" value="ECO:0007669"/>
    <property type="project" value="UniProtKB-UniRule"/>
</dbReference>
<dbReference type="GO" id="GO:0000028">
    <property type="term" value="P:ribosomal small subunit assembly"/>
    <property type="evidence" value="ECO:0000318"/>
    <property type="project" value="GO_Central"/>
</dbReference>
<dbReference type="GO" id="GO:0006412">
    <property type="term" value="P:translation"/>
    <property type="evidence" value="ECO:0000318"/>
    <property type="project" value="GO_Central"/>
</dbReference>
<dbReference type="CDD" id="cd14869">
    <property type="entry name" value="uS7_Bacteria"/>
    <property type="match status" value="1"/>
</dbReference>
<dbReference type="FunFam" id="1.10.455.10:FF:000001">
    <property type="entry name" value="30S ribosomal protein S7"/>
    <property type="match status" value="1"/>
</dbReference>
<dbReference type="Gene3D" id="1.10.455.10">
    <property type="entry name" value="Ribosomal protein S7 domain"/>
    <property type="match status" value="1"/>
</dbReference>
<dbReference type="HAMAP" id="MF_00480_B">
    <property type="entry name" value="Ribosomal_uS7_B"/>
    <property type="match status" value="1"/>
</dbReference>
<dbReference type="InterPro" id="IPR000235">
    <property type="entry name" value="Ribosomal_uS7"/>
</dbReference>
<dbReference type="InterPro" id="IPR005717">
    <property type="entry name" value="Ribosomal_uS7_bac/org-type"/>
</dbReference>
<dbReference type="InterPro" id="IPR020606">
    <property type="entry name" value="Ribosomal_uS7_CS"/>
</dbReference>
<dbReference type="InterPro" id="IPR023798">
    <property type="entry name" value="Ribosomal_uS7_dom"/>
</dbReference>
<dbReference type="InterPro" id="IPR036823">
    <property type="entry name" value="Ribosomal_uS7_dom_sf"/>
</dbReference>
<dbReference type="NCBIfam" id="TIGR01029">
    <property type="entry name" value="rpsG_bact"/>
    <property type="match status" value="1"/>
</dbReference>
<dbReference type="PANTHER" id="PTHR11205">
    <property type="entry name" value="RIBOSOMAL PROTEIN S7"/>
    <property type="match status" value="1"/>
</dbReference>
<dbReference type="Pfam" id="PF00177">
    <property type="entry name" value="Ribosomal_S7"/>
    <property type="match status" value="1"/>
</dbReference>
<dbReference type="PIRSF" id="PIRSF002122">
    <property type="entry name" value="RPS7p_RPS7a_RPS5e_RPS7o"/>
    <property type="match status" value="1"/>
</dbReference>
<dbReference type="SUPFAM" id="SSF47973">
    <property type="entry name" value="Ribosomal protein S7"/>
    <property type="match status" value="1"/>
</dbReference>
<dbReference type="PROSITE" id="PS00052">
    <property type="entry name" value="RIBOSOMAL_S7"/>
    <property type="match status" value="1"/>
</dbReference>
<sequence length="156" mass="17657">MPRRREVPKRDVLPDPKFGSVELTKFMNVLMIDGKKSVAERIVYGALEQIEKKTGKVAIEVFNEAIANAKPIVEVKSRRVGGANYQVPVEVRPSRRLALAMRWVRDAARKRGEKSMDLRLAGELIDASEGRGGALKKREEVHRMAEANKAFSHFRF</sequence>
<proteinExistence type="inferred from homology"/>
<protein>
    <recommendedName>
        <fullName evidence="1">Small ribosomal subunit protein uS7</fullName>
    </recommendedName>
    <alternativeName>
        <fullName evidence="2">30S ribosomal protein S7</fullName>
    </alternativeName>
</protein>
<feature type="chain" id="PRO_0000124308" description="Small ribosomal subunit protein uS7">
    <location>
        <begin position="1"/>
        <end position="156"/>
    </location>
</feature>